<gene>
    <name type="primary">ORF55</name>
</gene>
<comment type="function">
    <text evidence="1 4">Plays several roles during the time course of infection, including egress of virus particles from the perinuclear space and secondary envelopment of cytoplasmic capsids that bud into specific trans-Golgi network (TGN)-derived membranes.</text>
</comment>
<comment type="subunit">
    <text evidence="1 2 4">Oligomerizes. Interacts with ORF42; this interaction mediates ORF42 incorporation to virions. Interacts with vBCL2 (PubMed:29167347).</text>
</comment>
<comment type="subcellular location">
    <subcellularLocation>
        <location evidence="1">Virion tegument</location>
    </subcellularLocation>
    <subcellularLocation>
        <location evidence="1">Host cytoplasm</location>
    </subcellularLocation>
    <subcellularLocation>
        <location evidence="1">Host Golgi apparatus</location>
    </subcellularLocation>
</comment>
<comment type="PTM">
    <text evidence="1">Phosphorylated.</text>
</comment>
<comment type="PTM">
    <text evidence="1">Palmitoylation is necessary for Golgi localization.</text>
</comment>
<comment type="similarity">
    <text evidence="5">Belongs to the herpesviridae UL51 family.</text>
</comment>
<accession>F5H9W9</accession>
<name>TEG7_HHV8P</name>
<proteinExistence type="evidence at protein level"/>
<keyword id="KW-1035">Host cytoplasm</keyword>
<keyword id="KW-1040">Host Golgi apparatus</keyword>
<keyword id="KW-0449">Lipoprotein</keyword>
<keyword id="KW-0564">Palmitate</keyword>
<keyword id="KW-0597">Phosphoprotein</keyword>
<keyword id="KW-1185">Reference proteome</keyword>
<keyword id="KW-0946">Virion</keyword>
<keyword id="KW-0920">Virion tegument</keyword>
<organismHost>
    <name type="scientific">Homo sapiens</name>
    <name type="common">Human</name>
    <dbReference type="NCBI Taxonomy" id="9606"/>
</organismHost>
<feature type="chain" id="PRO_0000423807" description="Tegument protein ORF55">
    <location>
        <begin position="1"/>
        <end position="227"/>
    </location>
</feature>
<feature type="region of interest" description="Disordered" evidence="3">
    <location>
        <begin position="183"/>
        <end position="227"/>
    </location>
</feature>
<feature type="compositionally biased region" description="Polar residues" evidence="3">
    <location>
        <begin position="213"/>
        <end position="227"/>
    </location>
</feature>
<feature type="lipid moiety-binding region" description="S-palmitoyl cysteine; by host" evidence="1">
    <location>
        <position position="11"/>
    </location>
</feature>
<protein>
    <recommendedName>
        <fullName>Tegument protein ORF55</fullName>
    </recommendedName>
</protein>
<organism>
    <name type="scientific">Human herpesvirus 8 type P (isolate GK18)</name>
    <name type="common">HHV-8</name>
    <name type="synonym">Kaposi's sarcoma-associated herpesvirus</name>
    <dbReference type="NCBI Taxonomy" id="868565"/>
    <lineage>
        <taxon>Viruses</taxon>
        <taxon>Duplodnaviria</taxon>
        <taxon>Heunggongvirae</taxon>
        <taxon>Peploviricota</taxon>
        <taxon>Herviviricetes</taxon>
        <taxon>Herpesvirales</taxon>
        <taxon>Orthoherpesviridae</taxon>
        <taxon>Gammaherpesvirinae</taxon>
        <taxon>Rhadinovirus</taxon>
        <taxon>Rhadinovirus humangamma8</taxon>
        <taxon>Human herpesvirus 8</taxon>
    </lineage>
</organism>
<dbReference type="EMBL" id="AF148805">
    <property type="protein sequence ID" value="ABD28906.1"/>
    <property type="molecule type" value="Genomic_DNA"/>
</dbReference>
<dbReference type="RefSeq" id="YP_001129408.1">
    <property type="nucleotide sequence ID" value="NC_009333.1"/>
</dbReference>
<dbReference type="SMR" id="F5H9W9"/>
<dbReference type="BioGRID" id="1776935">
    <property type="interactions" value="1"/>
</dbReference>
<dbReference type="DNASU" id="4961432"/>
<dbReference type="GeneID" id="4961432"/>
<dbReference type="KEGG" id="vg:4961432"/>
<dbReference type="Proteomes" id="UP000000942">
    <property type="component" value="Segment"/>
</dbReference>
<dbReference type="GO" id="GO:0044177">
    <property type="term" value="C:host cell Golgi apparatus"/>
    <property type="evidence" value="ECO:0007669"/>
    <property type="project" value="UniProtKB-SubCell"/>
</dbReference>
<dbReference type="GO" id="GO:0019033">
    <property type="term" value="C:viral tegument"/>
    <property type="evidence" value="ECO:0007669"/>
    <property type="project" value="UniProtKB-SubCell"/>
</dbReference>
<dbReference type="InterPro" id="IPR007619">
    <property type="entry name" value="Herpes_U44"/>
</dbReference>
<dbReference type="Pfam" id="PF04533">
    <property type="entry name" value="Herpes_U44"/>
    <property type="match status" value="1"/>
</dbReference>
<evidence type="ECO:0000250" key="1">
    <source>
        <dbReference type="UniProtKB" id="P10235"/>
    </source>
</evidence>
<evidence type="ECO:0000250" key="2">
    <source>
        <dbReference type="UniProtKB" id="P16823"/>
    </source>
</evidence>
<evidence type="ECO:0000256" key="3">
    <source>
        <dbReference type="SAM" id="MobiDB-lite"/>
    </source>
</evidence>
<evidence type="ECO:0000269" key="4">
    <source>
    </source>
</evidence>
<evidence type="ECO:0000305" key="5"/>
<sequence>MSSPWYTWTCCGINLFGRGNHAYKRLGDPLEGCPERWRQEIDLGLPPGVCLGDVVQSNLGTTALHQTYLLAVQSNKITDYLKRFDVAKIPAGCQETVKTQVKKLQSIQNVVWNTMLALAVGEITVDDSALQSLLNKRAGECVSLMEMEKLATAMASDDSVIWASEISHSLSEPTSVLPLTPAVTRQPEATLPKPPTEDPSVSAMHSSIPPRPSSTLEETTESAIGST</sequence>
<reference key="1">
    <citation type="journal article" date="1999" name="J. Virol.">
        <title>Identification of a spliced gene from Kaposi's sarcoma-associated herpesvirus encoding a protein with similarities to latent membrane proteins 1 and 2A of Epstein-Barr virus.</title>
        <authorList>
            <person name="Glenn M."/>
            <person name="Rainbow L."/>
            <person name="Aurade F."/>
            <person name="Davison A."/>
            <person name="Schulz T.F."/>
        </authorList>
    </citation>
    <scope>NUCLEOTIDE SEQUENCE [LARGE SCALE GENOMIC DNA]</scope>
</reference>
<reference key="2">
    <citation type="journal article" date="2006" name="J. Gen. Virol.">
        <title>Kaposi's sarcoma-associated herpesvirus immune modulation: an overview.</title>
        <authorList>
            <person name="Rezaee S.A.R."/>
            <person name="Cunningham C."/>
            <person name="Davison A.J."/>
            <person name="Blackbourn D.J."/>
        </authorList>
    </citation>
    <scope>NUCLEOTIDE SEQUENCE [LARGE SCALE GENOMIC DNA]</scope>
</reference>
<reference key="3">
    <citation type="journal article" date="2018" name="J. Virol.">
        <title>Novel Role of vBcl2 in the Virion Assembly of Kaposi's Sarcoma-Associated Herpesvirus.</title>
        <authorList>
            <person name="Liang Q."/>
            <person name="Wei D."/>
            <person name="Chung B."/>
            <person name="Brulois K.F."/>
            <person name="Guo C."/>
            <person name="Dong S."/>
            <person name="Gao S.J."/>
            <person name="Feng P."/>
            <person name="Liang C."/>
            <person name="Jung J.U."/>
        </authorList>
    </citation>
    <scope>FUNCTION</scope>
    <scope>INTERACTION WITH VBCL2</scope>
</reference>